<feature type="chain" id="PRO_1000095081" description="Elongation factor Tu">
    <location>
        <begin position="1"/>
        <end position="396"/>
    </location>
</feature>
<feature type="domain" description="tr-type G">
    <location>
        <begin position="10"/>
        <end position="205"/>
    </location>
</feature>
<feature type="region of interest" description="G1" evidence="1">
    <location>
        <begin position="19"/>
        <end position="26"/>
    </location>
</feature>
<feature type="region of interest" description="G2" evidence="1">
    <location>
        <begin position="62"/>
        <end position="66"/>
    </location>
</feature>
<feature type="region of interest" description="G3" evidence="1">
    <location>
        <begin position="83"/>
        <end position="86"/>
    </location>
</feature>
<feature type="region of interest" description="G4" evidence="1">
    <location>
        <begin position="138"/>
        <end position="141"/>
    </location>
</feature>
<feature type="region of interest" description="G5" evidence="1">
    <location>
        <begin position="175"/>
        <end position="177"/>
    </location>
</feature>
<feature type="binding site" evidence="2">
    <location>
        <begin position="19"/>
        <end position="26"/>
    </location>
    <ligand>
        <name>GTP</name>
        <dbReference type="ChEBI" id="CHEBI:37565"/>
    </ligand>
</feature>
<feature type="binding site" evidence="2">
    <location>
        <position position="26"/>
    </location>
    <ligand>
        <name>Mg(2+)</name>
        <dbReference type="ChEBI" id="CHEBI:18420"/>
    </ligand>
</feature>
<feature type="binding site" evidence="2">
    <location>
        <begin position="83"/>
        <end position="87"/>
    </location>
    <ligand>
        <name>GTP</name>
        <dbReference type="ChEBI" id="CHEBI:37565"/>
    </ligand>
</feature>
<feature type="binding site" evidence="2">
    <location>
        <begin position="138"/>
        <end position="141"/>
    </location>
    <ligand>
        <name>GTP</name>
        <dbReference type="ChEBI" id="CHEBI:37565"/>
    </ligand>
</feature>
<dbReference type="EC" id="3.6.5.3" evidence="2"/>
<dbReference type="EMBL" id="CP000854">
    <property type="protein sequence ID" value="ACC39471.1"/>
    <property type="molecule type" value="Genomic_DNA"/>
</dbReference>
<dbReference type="RefSeq" id="WP_011739036.1">
    <property type="nucleotide sequence ID" value="NC_010612.1"/>
</dbReference>
<dbReference type="SMR" id="B2HSL3"/>
<dbReference type="STRING" id="216594.MMAR_1014"/>
<dbReference type="GeneID" id="34342268"/>
<dbReference type="GeneID" id="93438622"/>
<dbReference type="KEGG" id="mmi:MMAR_1014"/>
<dbReference type="eggNOG" id="COG0050">
    <property type="taxonomic scope" value="Bacteria"/>
</dbReference>
<dbReference type="HOGENOM" id="CLU_007265_0_1_11"/>
<dbReference type="OrthoDB" id="9803139at2"/>
<dbReference type="Proteomes" id="UP000001190">
    <property type="component" value="Chromosome"/>
</dbReference>
<dbReference type="GO" id="GO:0005829">
    <property type="term" value="C:cytosol"/>
    <property type="evidence" value="ECO:0007669"/>
    <property type="project" value="TreeGrafter"/>
</dbReference>
<dbReference type="GO" id="GO:0005525">
    <property type="term" value="F:GTP binding"/>
    <property type="evidence" value="ECO:0007669"/>
    <property type="project" value="UniProtKB-UniRule"/>
</dbReference>
<dbReference type="GO" id="GO:0003924">
    <property type="term" value="F:GTPase activity"/>
    <property type="evidence" value="ECO:0007669"/>
    <property type="project" value="InterPro"/>
</dbReference>
<dbReference type="GO" id="GO:0003746">
    <property type="term" value="F:translation elongation factor activity"/>
    <property type="evidence" value="ECO:0007669"/>
    <property type="project" value="UniProtKB-UniRule"/>
</dbReference>
<dbReference type="CDD" id="cd01884">
    <property type="entry name" value="EF_Tu"/>
    <property type="match status" value="1"/>
</dbReference>
<dbReference type="CDD" id="cd03697">
    <property type="entry name" value="EFTU_II"/>
    <property type="match status" value="1"/>
</dbReference>
<dbReference type="CDD" id="cd03707">
    <property type="entry name" value="EFTU_III"/>
    <property type="match status" value="1"/>
</dbReference>
<dbReference type="FunFam" id="2.40.30.10:FF:000001">
    <property type="entry name" value="Elongation factor Tu"/>
    <property type="match status" value="1"/>
</dbReference>
<dbReference type="FunFam" id="3.40.50.300:FF:000003">
    <property type="entry name" value="Elongation factor Tu"/>
    <property type="match status" value="1"/>
</dbReference>
<dbReference type="Gene3D" id="3.40.50.300">
    <property type="entry name" value="P-loop containing nucleotide triphosphate hydrolases"/>
    <property type="match status" value="1"/>
</dbReference>
<dbReference type="Gene3D" id="2.40.30.10">
    <property type="entry name" value="Translation factors"/>
    <property type="match status" value="2"/>
</dbReference>
<dbReference type="HAMAP" id="MF_00118_B">
    <property type="entry name" value="EF_Tu_B"/>
    <property type="match status" value="1"/>
</dbReference>
<dbReference type="InterPro" id="IPR041709">
    <property type="entry name" value="EF-Tu_GTP-bd"/>
</dbReference>
<dbReference type="InterPro" id="IPR050055">
    <property type="entry name" value="EF-Tu_GTPase"/>
</dbReference>
<dbReference type="InterPro" id="IPR004161">
    <property type="entry name" value="EFTu-like_2"/>
</dbReference>
<dbReference type="InterPro" id="IPR033720">
    <property type="entry name" value="EFTU_2"/>
</dbReference>
<dbReference type="InterPro" id="IPR031157">
    <property type="entry name" value="G_TR_CS"/>
</dbReference>
<dbReference type="InterPro" id="IPR027417">
    <property type="entry name" value="P-loop_NTPase"/>
</dbReference>
<dbReference type="InterPro" id="IPR005225">
    <property type="entry name" value="Small_GTP-bd"/>
</dbReference>
<dbReference type="InterPro" id="IPR000795">
    <property type="entry name" value="T_Tr_GTP-bd_dom"/>
</dbReference>
<dbReference type="InterPro" id="IPR009000">
    <property type="entry name" value="Transl_B-barrel_sf"/>
</dbReference>
<dbReference type="InterPro" id="IPR009001">
    <property type="entry name" value="Transl_elong_EF1A/Init_IF2_C"/>
</dbReference>
<dbReference type="InterPro" id="IPR004541">
    <property type="entry name" value="Transl_elong_EFTu/EF1A_bac/org"/>
</dbReference>
<dbReference type="InterPro" id="IPR004160">
    <property type="entry name" value="Transl_elong_EFTu/EF1A_C"/>
</dbReference>
<dbReference type="NCBIfam" id="TIGR00485">
    <property type="entry name" value="EF-Tu"/>
    <property type="match status" value="1"/>
</dbReference>
<dbReference type="NCBIfam" id="NF000766">
    <property type="entry name" value="PRK00049.1"/>
    <property type="match status" value="1"/>
</dbReference>
<dbReference type="NCBIfam" id="NF009372">
    <property type="entry name" value="PRK12735.1"/>
    <property type="match status" value="1"/>
</dbReference>
<dbReference type="NCBIfam" id="NF009373">
    <property type="entry name" value="PRK12736.1"/>
    <property type="match status" value="1"/>
</dbReference>
<dbReference type="NCBIfam" id="TIGR00231">
    <property type="entry name" value="small_GTP"/>
    <property type="match status" value="1"/>
</dbReference>
<dbReference type="PANTHER" id="PTHR43721:SF22">
    <property type="entry name" value="ELONGATION FACTOR TU, MITOCHONDRIAL"/>
    <property type="match status" value="1"/>
</dbReference>
<dbReference type="PANTHER" id="PTHR43721">
    <property type="entry name" value="ELONGATION FACTOR TU-RELATED"/>
    <property type="match status" value="1"/>
</dbReference>
<dbReference type="Pfam" id="PF00009">
    <property type="entry name" value="GTP_EFTU"/>
    <property type="match status" value="1"/>
</dbReference>
<dbReference type="Pfam" id="PF03144">
    <property type="entry name" value="GTP_EFTU_D2"/>
    <property type="match status" value="1"/>
</dbReference>
<dbReference type="Pfam" id="PF03143">
    <property type="entry name" value="GTP_EFTU_D3"/>
    <property type="match status" value="1"/>
</dbReference>
<dbReference type="PRINTS" id="PR00315">
    <property type="entry name" value="ELONGATNFCT"/>
</dbReference>
<dbReference type="SUPFAM" id="SSF50465">
    <property type="entry name" value="EF-Tu/eEF-1alpha/eIF2-gamma C-terminal domain"/>
    <property type="match status" value="1"/>
</dbReference>
<dbReference type="SUPFAM" id="SSF52540">
    <property type="entry name" value="P-loop containing nucleoside triphosphate hydrolases"/>
    <property type="match status" value="1"/>
</dbReference>
<dbReference type="SUPFAM" id="SSF50447">
    <property type="entry name" value="Translation proteins"/>
    <property type="match status" value="1"/>
</dbReference>
<dbReference type="PROSITE" id="PS00301">
    <property type="entry name" value="G_TR_1"/>
    <property type="match status" value="1"/>
</dbReference>
<dbReference type="PROSITE" id="PS51722">
    <property type="entry name" value="G_TR_2"/>
    <property type="match status" value="1"/>
</dbReference>
<organism>
    <name type="scientific">Mycobacterium marinum (strain ATCC BAA-535 / M)</name>
    <dbReference type="NCBI Taxonomy" id="216594"/>
    <lineage>
        <taxon>Bacteria</taxon>
        <taxon>Bacillati</taxon>
        <taxon>Actinomycetota</taxon>
        <taxon>Actinomycetes</taxon>
        <taxon>Mycobacteriales</taxon>
        <taxon>Mycobacteriaceae</taxon>
        <taxon>Mycobacterium</taxon>
        <taxon>Mycobacterium ulcerans group</taxon>
    </lineage>
</organism>
<keyword id="KW-0963">Cytoplasm</keyword>
<keyword id="KW-0251">Elongation factor</keyword>
<keyword id="KW-0342">GTP-binding</keyword>
<keyword id="KW-0378">Hydrolase</keyword>
<keyword id="KW-0460">Magnesium</keyword>
<keyword id="KW-0479">Metal-binding</keyword>
<keyword id="KW-0547">Nucleotide-binding</keyword>
<keyword id="KW-0648">Protein biosynthesis</keyword>
<keyword id="KW-1185">Reference proteome</keyword>
<reference key="1">
    <citation type="journal article" date="2008" name="Genome Res.">
        <title>Insights from the complete genome sequence of Mycobacterium marinum on the evolution of Mycobacterium tuberculosis.</title>
        <authorList>
            <person name="Stinear T.P."/>
            <person name="Seemann T."/>
            <person name="Harrison P.F."/>
            <person name="Jenkin G.A."/>
            <person name="Davies J.K."/>
            <person name="Johnson P.D."/>
            <person name="Abdellah Z."/>
            <person name="Arrowsmith C."/>
            <person name="Chillingworth T."/>
            <person name="Churcher C."/>
            <person name="Clarke K."/>
            <person name="Cronin A."/>
            <person name="Davis P."/>
            <person name="Goodhead I."/>
            <person name="Holroyd N."/>
            <person name="Jagels K."/>
            <person name="Lord A."/>
            <person name="Moule S."/>
            <person name="Mungall K."/>
            <person name="Norbertczak H."/>
            <person name="Quail M.A."/>
            <person name="Rabbinowitsch E."/>
            <person name="Walker D."/>
            <person name="White B."/>
            <person name="Whitehead S."/>
            <person name="Small P.L."/>
            <person name="Brosch R."/>
            <person name="Ramakrishnan L."/>
            <person name="Fischbach M.A."/>
            <person name="Parkhill J."/>
            <person name="Cole S.T."/>
        </authorList>
    </citation>
    <scope>NUCLEOTIDE SEQUENCE [LARGE SCALE GENOMIC DNA]</scope>
    <source>
        <strain>ATCC BAA-535 / M</strain>
    </source>
</reference>
<evidence type="ECO:0000250" key="1"/>
<evidence type="ECO:0000255" key="2">
    <source>
        <dbReference type="HAMAP-Rule" id="MF_00118"/>
    </source>
</evidence>
<gene>
    <name evidence="2" type="primary">tuf</name>
    <name type="ordered locus">MMAR_1014</name>
</gene>
<name>EFTU_MYCMM</name>
<proteinExistence type="inferred from homology"/>
<accession>B2HSL3</accession>
<protein>
    <recommendedName>
        <fullName evidence="2">Elongation factor Tu</fullName>
        <shortName evidence="2">EF-Tu</shortName>
        <ecNumber evidence="2">3.6.5.3</ecNumber>
    </recommendedName>
</protein>
<comment type="function">
    <text evidence="2">GTP hydrolase that promotes the GTP-dependent binding of aminoacyl-tRNA to the A-site of ribosomes during protein biosynthesis.</text>
</comment>
<comment type="catalytic activity">
    <reaction evidence="2">
        <text>GTP + H2O = GDP + phosphate + H(+)</text>
        <dbReference type="Rhea" id="RHEA:19669"/>
        <dbReference type="ChEBI" id="CHEBI:15377"/>
        <dbReference type="ChEBI" id="CHEBI:15378"/>
        <dbReference type="ChEBI" id="CHEBI:37565"/>
        <dbReference type="ChEBI" id="CHEBI:43474"/>
        <dbReference type="ChEBI" id="CHEBI:58189"/>
        <dbReference type="EC" id="3.6.5.3"/>
    </reaction>
    <physiologicalReaction direction="left-to-right" evidence="2">
        <dbReference type="Rhea" id="RHEA:19670"/>
    </physiologicalReaction>
</comment>
<comment type="subunit">
    <text evidence="2">Monomer.</text>
</comment>
<comment type="subcellular location">
    <subcellularLocation>
        <location evidence="2">Cytoplasm</location>
    </subcellularLocation>
</comment>
<comment type="similarity">
    <text evidence="2">Belongs to the TRAFAC class translation factor GTPase superfamily. Classic translation factor GTPase family. EF-Tu/EF-1A subfamily.</text>
</comment>
<sequence length="396" mass="43806">MAKAKFQRTKPHVNIGTIGHVDHGKTTLTAAITKVLHDKYPELNESRAFDQIDNAPEERQRGITINISHVEYQTEKRHYAHVDAPGHADYIKNMITGAAQMDGAILVVAATDGPMPQTREHVLLARQVGVPYILVALNKSDAVDDEELLELVEMEVRELLAAQEFDEDAPVVRVSALKALEGDPKWVESVEQLMDAVDESIPDPVRETDRPFLMPVEDVFTITGRGTVVTGRVERGIINVNEEVEIVGIRPTSTKTTVTGVEMFRKLLDQGQAGDNVGLLLRGIKREDVERGQVVVKPGTTTPHTEFEGQVYILSKDEGGRHTPFFNNYRPQFYFRTTDVTGVVTLPEGTEMVMPGDNTNISVKLIQPVAMDDGLRFAIREGGRTVGAGRVVKIIK</sequence>